<reference key="1">
    <citation type="journal article" date="1996" name="DNA Res.">
        <title>Sequence analysis of the genome of the unicellular cyanobacterium Synechocystis sp. strain PCC6803. II. Sequence determination of the entire genome and assignment of potential protein-coding regions.</title>
        <authorList>
            <person name="Kaneko T."/>
            <person name="Sato S."/>
            <person name="Kotani H."/>
            <person name="Tanaka A."/>
            <person name="Asamizu E."/>
            <person name="Nakamura Y."/>
            <person name="Miyajima N."/>
            <person name="Hirosawa M."/>
            <person name="Sugiura M."/>
            <person name="Sasamoto S."/>
            <person name="Kimura T."/>
            <person name="Hosouchi T."/>
            <person name="Matsuno A."/>
            <person name="Muraki A."/>
            <person name="Nakazaki N."/>
            <person name="Naruo K."/>
            <person name="Okumura S."/>
            <person name="Shimpo S."/>
            <person name="Takeuchi C."/>
            <person name="Wada T."/>
            <person name="Watanabe A."/>
            <person name="Yamada M."/>
            <person name="Yasuda M."/>
            <person name="Tabata S."/>
        </authorList>
    </citation>
    <scope>NUCLEOTIDE SEQUENCE [LARGE SCALE GENOMIC DNA]</scope>
    <source>
        <strain>ATCC 27184 / PCC 6803 / Kazusa</strain>
    </source>
</reference>
<accession>P74095</accession>
<organism>
    <name type="scientific">Synechocystis sp. (strain ATCC 27184 / PCC 6803 / Kazusa)</name>
    <dbReference type="NCBI Taxonomy" id="1111708"/>
    <lineage>
        <taxon>Bacteria</taxon>
        <taxon>Bacillati</taxon>
        <taxon>Cyanobacteriota</taxon>
        <taxon>Cyanophyceae</taxon>
        <taxon>Synechococcales</taxon>
        <taxon>Merismopediaceae</taxon>
        <taxon>Synechocystis</taxon>
    </lineage>
</organism>
<sequence length="76" mass="7987">MCLALPGQVVSLMPNSDPLLLTGKVSFGGIIKTISLAYVPEVKVGDYVIVHVGFAISIVDEEAAQETLIDLAEMGV</sequence>
<gene>
    <name type="primary">hypC</name>
    <name type="ordered locus">ssl3580</name>
</gene>
<feature type="chain" id="PRO_0000201402" description="Hydrogenase maturation factor HypC">
    <location>
        <begin position="1"/>
        <end position="76"/>
    </location>
</feature>
<name>HYPC_SYNY3</name>
<protein>
    <recommendedName>
        <fullName evidence="1">Hydrogenase maturation factor HypC</fullName>
    </recommendedName>
</protein>
<comment type="function">
    <text evidence="1">Involved in the maturation of [NiFe] hydrogenases. Involved in the biosynthesis of the Fe(CN)(2)CO cofactor.</text>
</comment>
<comment type="pathway">
    <text evidence="1">Protein modification; [NiFe] hydrogenase maturation.</text>
</comment>
<comment type="similarity">
    <text evidence="2">Belongs to the HupF/HypC family.</text>
</comment>
<proteinExistence type="inferred from homology"/>
<dbReference type="EMBL" id="BA000022">
    <property type="protein sequence ID" value="BAA18180.1"/>
    <property type="molecule type" value="Genomic_DNA"/>
</dbReference>
<dbReference type="PIR" id="S75619">
    <property type="entry name" value="S75619"/>
</dbReference>
<dbReference type="SMR" id="P74095"/>
<dbReference type="STRING" id="1148.gene:10499053"/>
<dbReference type="PaxDb" id="1148-1653265"/>
<dbReference type="EnsemblBacteria" id="BAA18180">
    <property type="protein sequence ID" value="BAA18180"/>
    <property type="gene ID" value="BAA18180"/>
</dbReference>
<dbReference type="KEGG" id="syn:ssl3580"/>
<dbReference type="eggNOG" id="COG0298">
    <property type="taxonomic scope" value="Bacteria"/>
</dbReference>
<dbReference type="InParanoid" id="P74095"/>
<dbReference type="PhylomeDB" id="P74095"/>
<dbReference type="UniPathway" id="UPA00335"/>
<dbReference type="Proteomes" id="UP000001425">
    <property type="component" value="Chromosome"/>
</dbReference>
<dbReference type="GO" id="GO:1902670">
    <property type="term" value="F:carbon dioxide binding"/>
    <property type="evidence" value="ECO:0000318"/>
    <property type="project" value="GO_Central"/>
</dbReference>
<dbReference type="GO" id="GO:0005506">
    <property type="term" value="F:iron ion binding"/>
    <property type="evidence" value="ECO:0000318"/>
    <property type="project" value="GO_Central"/>
</dbReference>
<dbReference type="GO" id="GO:0051604">
    <property type="term" value="P:protein maturation"/>
    <property type="evidence" value="ECO:0000318"/>
    <property type="project" value="GO_Central"/>
</dbReference>
<dbReference type="FunFam" id="2.30.30.140:FF:000022">
    <property type="entry name" value="Hydrogenase assembly chaperone HybG"/>
    <property type="match status" value="1"/>
</dbReference>
<dbReference type="Gene3D" id="2.30.30.140">
    <property type="match status" value="1"/>
</dbReference>
<dbReference type="InterPro" id="IPR019812">
    <property type="entry name" value="Hydgase_assmbl_chp_CS"/>
</dbReference>
<dbReference type="InterPro" id="IPR001109">
    <property type="entry name" value="Hydrogenase_HupF/HypC"/>
</dbReference>
<dbReference type="NCBIfam" id="TIGR00074">
    <property type="entry name" value="hypC_hupF"/>
    <property type="match status" value="1"/>
</dbReference>
<dbReference type="PANTHER" id="PTHR35177">
    <property type="entry name" value="HYDROGENASE MATURATION FACTOR HYBG"/>
    <property type="match status" value="1"/>
</dbReference>
<dbReference type="PANTHER" id="PTHR35177:SF2">
    <property type="entry name" value="HYDROGENASE MATURATION FACTOR HYBG"/>
    <property type="match status" value="1"/>
</dbReference>
<dbReference type="Pfam" id="PF01455">
    <property type="entry name" value="HupF_HypC"/>
    <property type="match status" value="1"/>
</dbReference>
<dbReference type="PRINTS" id="PR00445">
    <property type="entry name" value="HUPFHYPC"/>
</dbReference>
<dbReference type="SUPFAM" id="SSF159127">
    <property type="entry name" value="HupF/HypC-like"/>
    <property type="match status" value="1"/>
</dbReference>
<dbReference type="PROSITE" id="PS01097">
    <property type="entry name" value="HUPF_HYPC"/>
    <property type="match status" value="1"/>
</dbReference>
<evidence type="ECO:0000250" key="1">
    <source>
        <dbReference type="UniProtKB" id="P0AAM3"/>
    </source>
</evidence>
<evidence type="ECO:0000305" key="2"/>
<keyword id="KW-1185">Reference proteome</keyword>